<feature type="chain" id="PRO_1000059767" description="ATP-dependent 6-phosphofructokinase">
    <location>
        <begin position="1"/>
        <end position="321"/>
    </location>
</feature>
<feature type="active site" description="Proton acceptor" evidence="1">
    <location>
        <position position="129"/>
    </location>
</feature>
<feature type="binding site" evidence="1">
    <location>
        <position position="12"/>
    </location>
    <ligand>
        <name>ATP</name>
        <dbReference type="ChEBI" id="CHEBI:30616"/>
    </ligand>
</feature>
<feature type="binding site" evidence="1">
    <location>
        <begin position="22"/>
        <end position="26"/>
    </location>
    <ligand>
        <name>ADP</name>
        <dbReference type="ChEBI" id="CHEBI:456216"/>
        <note>allosteric activator; ligand shared between dimeric partners</note>
    </ligand>
</feature>
<feature type="binding site" evidence="1">
    <location>
        <begin position="55"/>
        <end position="60"/>
    </location>
    <ligand>
        <name>ADP</name>
        <dbReference type="ChEBI" id="CHEBI:456216"/>
        <note>allosteric activator; ligand shared between dimeric partners</note>
    </ligand>
</feature>
<feature type="binding site" evidence="1">
    <location>
        <begin position="73"/>
        <end position="74"/>
    </location>
    <ligand>
        <name>ATP</name>
        <dbReference type="ChEBI" id="CHEBI:30616"/>
    </ligand>
</feature>
<feature type="binding site" evidence="1">
    <location>
        <begin position="103"/>
        <end position="106"/>
    </location>
    <ligand>
        <name>ATP</name>
        <dbReference type="ChEBI" id="CHEBI:30616"/>
    </ligand>
</feature>
<feature type="binding site" evidence="1">
    <location>
        <position position="104"/>
    </location>
    <ligand>
        <name>Mg(2+)</name>
        <dbReference type="ChEBI" id="CHEBI:18420"/>
        <note>catalytic</note>
    </ligand>
</feature>
<feature type="binding site" description="in other chain" evidence="1">
    <location>
        <begin position="127"/>
        <end position="129"/>
    </location>
    <ligand>
        <name>substrate</name>
        <note>ligand shared between dimeric partners</note>
    </ligand>
</feature>
<feature type="binding site" description="in other chain" evidence="1">
    <location>
        <position position="156"/>
    </location>
    <ligand>
        <name>ADP</name>
        <dbReference type="ChEBI" id="CHEBI:456216"/>
        <note>allosteric activator; ligand shared between dimeric partners</note>
    </ligand>
</feature>
<feature type="binding site" evidence="1">
    <location>
        <position position="164"/>
    </location>
    <ligand>
        <name>substrate</name>
        <note>ligand shared between dimeric partners</note>
    </ligand>
</feature>
<feature type="binding site" description="in other chain" evidence="1">
    <location>
        <begin position="171"/>
        <end position="173"/>
    </location>
    <ligand>
        <name>substrate</name>
        <note>ligand shared between dimeric partners</note>
    </ligand>
</feature>
<feature type="binding site" description="in other chain" evidence="1">
    <location>
        <begin position="187"/>
        <end position="189"/>
    </location>
    <ligand>
        <name>ADP</name>
        <dbReference type="ChEBI" id="CHEBI:456216"/>
        <note>allosteric activator; ligand shared between dimeric partners</note>
    </ligand>
</feature>
<feature type="binding site" description="in other chain" evidence="1">
    <location>
        <position position="213"/>
    </location>
    <ligand>
        <name>ADP</name>
        <dbReference type="ChEBI" id="CHEBI:456216"/>
        <note>allosteric activator; ligand shared between dimeric partners</note>
    </ligand>
</feature>
<feature type="binding site" description="in other chain" evidence="1">
    <location>
        <begin position="215"/>
        <end position="217"/>
    </location>
    <ligand>
        <name>ADP</name>
        <dbReference type="ChEBI" id="CHEBI:456216"/>
        <note>allosteric activator; ligand shared between dimeric partners</note>
    </ligand>
</feature>
<feature type="binding site" description="in other chain" evidence="1">
    <location>
        <position position="224"/>
    </location>
    <ligand>
        <name>substrate</name>
        <note>ligand shared between dimeric partners</note>
    </ligand>
</feature>
<feature type="binding site" evidence="1">
    <location>
        <position position="245"/>
    </location>
    <ligand>
        <name>substrate</name>
        <note>ligand shared between dimeric partners</note>
    </ligand>
</feature>
<feature type="binding site" description="in other chain" evidence="1">
    <location>
        <begin position="251"/>
        <end position="254"/>
    </location>
    <ligand>
        <name>substrate</name>
        <note>ligand shared between dimeric partners</note>
    </ligand>
</feature>
<proteinExistence type="inferred from homology"/>
<name>PFKA_HISS1</name>
<keyword id="KW-0021">Allosteric enzyme</keyword>
<keyword id="KW-0067">ATP-binding</keyword>
<keyword id="KW-0963">Cytoplasm</keyword>
<keyword id="KW-0324">Glycolysis</keyword>
<keyword id="KW-0418">Kinase</keyword>
<keyword id="KW-0460">Magnesium</keyword>
<keyword id="KW-0479">Metal-binding</keyword>
<keyword id="KW-0547">Nucleotide-binding</keyword>
<keyword id="KW-0808">Transferase</keyword>
<reference key="1">
    <citation type="journal article" date="2007" name="J. Bacteriol.">
        <title>Complete genome sequence of Haemophilus somnus (Histophilus somni) strain 129Pt and comparison to Haemophilus ducreyi 35000HP and Haemophilus influenzae Rd.</title>
        <authorList>
            <person name="Challacombe J.F."/>
            <person name="Duncan A.J."/>
            <person name="Brettin T.S."/>
            <person name="Bruce D."/>
            <person name="Chertkov O."/>
            <person name="Detter J.C."/>
            <person name="Han C.S."/>
            <person name="Misra M."/>
            <person name="Richardson P."/>
            <person name="Tapia R."/>
            <person name="Thayer N."/>
            <person name="Xie G."/>
            <person name="Inzana T.J."/>
        </authorList>
    </citation>
    <scope>NUCLEOTIDE SEQUENCE [LARGE SCALE GENOMIC DNA]</scope>
    <source>
        <strain>129Pt</strain>
    </source>
</reference>
<accession>Q0I267</accession>
<dbReference type="EC" id="2.7.1.11" evidence="1"/>
<dbReference type="EMBL" id="CP000436">
    <property type="protein sequence ID" value="ABI24762.1"/>
    <property type="molecule type" value="Genomic_DNA"/>
</dbReference>
<dbReference type="SMR" id="Q0I267"/>
<dbReference type="KEGG" id="hso:HS_0485"/>
<dbReference type="eggNOG" id="COG0205">
    <property type="taxonomic scope" value="Bacteria"/>
</dbReference>
<dbReference type="HOGENOM" id="CLU_020655_0_1_6"/>
<dbReference type="UniPathway" id="UPA00109">
    <property type="reaction ID" value="UER00182"/>
</dbReference>
<dbReference type="GO" id="GO:0005945">
    <property type="term" value="C:6-phosphofructokinase complex"/>
    <property type="evidence" value="ECO:0007669"/>
    <property type="project" value="TreeGrafter"/>
</dbReference>
<dbReference type="GO" id="GO:0003872">
    <property type="term" value="F:6-phosphofructokinase activity"/>
    <property type="evidence" value="ECO:0007669"/>
    <property type="project" value="UniProtKB-UniRule"/>
</dbReference>
<dbReference type="GO" id="GO:0016208">
    <property type="term" value="F:AMP binding"/>
    <property type="evidence" value="ECO:0007669"/>
    <property type="project" value="TreeGrafter"/>
</dbReference>
<dbReference type="GO" id="GO:0005524">
    <property type="term" value="F:ATP binding"/>
    <property type="evidence" value="ECO:0007669"/>
    <property type="project" value="UniProtKB-KW"/>
</dbReference>
<dbReference type="GO" id="GO:0070095">
    <property type="term" value="F:fructose-6-phosphate binding"/>
    <property type="evidence" value="ECO:0007669"/>
    <property type="project" value="TreeGrafter"/>
</dbReference>
<dbReference type="GO" id="GO:0042802">
    <property type="term" value="F:identical protein binding"/>
    <property type="evidence" value="ECO:0007669"/>
    <property type="project" value="TreeGrafter"/>
</dbReference>
<dbReference type="GO" id="GO:0046872">
    <property type="term" value="F:metal ion binding"/>
    <property type="evidence" value="ECO:0007669"/>
    <property type="project" value="UniProtKB-KW"/>
</dbReference>
<dbReference type="GO" id="GO:0048029">
    <property type="term" value="F:monosaccharide binding"/>
    <property type="evidence" value="ECO:0007669"/>
    <property type="project" value="TreeGrafter"/>
</dbReference>
<dbReference type="GO" id="GO:0061621">
    <property type="term" value="P:canonical glycolysis"/>
    <property type="evidence" value="ECO:0007669"/>
    <property type="project" value="TreeGrafter"/>
</dbReference>
<dbReference type="GO" id="GO:0030388">
    <property type="term" value="P:fructose 1,6-bisphosphate metabolic process"/>
    <property type="evidence" value="ECO:0007669"/>
    <property type="project" value="TreeGrafter"/>
</dbReference>
<dbReference type="GO" id="GO:0006002">
    <property type="term" value="P:fructose 6-phosphate metabolic process"/>
    <property type="evidence" value="ECO:0007669"/>
    <property type="project" value="InterPro"/>
</dbReference>
<dbReference type="CDD" id="cd00763">
    <property type="entry name" value="Bacterial_PFK"/>
    <property type="match status" value="1"/>
</dbReference>
<dbReference type="FunFam" id="3.40.50.450:FF:000001">
    <property type="entry name" value="ATP-dependent 6-phosphofructokinase"/>
    <property type="match status" value="1"/>
</dbReference>
<dbReference type="FunFam" id="3.40.50.460:FF:000002">
    <property type="entry name" value="ATP-dependent 6-phosphofructokinase"/>
    <property type="match status" value="1"/>
</dbReference>
<dbReference type="Gene3D" id="3.40.50.450">
    <property type="match status" value="1"/>
</dbReference>
<dbReference type="Gene3D" id="3.40.50.460">
    <property type="entry name" value="Phosphofructokinase domain"/>
    <property type="match status" value="1"/>
</dbReference>
<dbReference type="HAMAP" id="MF_00339">
    <property type="entry name" value="Phosphofructokinase_I_B1"/>
    <property type="match status" value="1"/>
</dbReference>
<dbReference type="InterPro" id="IPR022953">
    <property type="entry name" value="ATP_PFK"/>
</dbReference>
<dbReference type="InterPro" id="IPR012003">
    <property type="entry name" value="ATP_PFK_prok-type"/>
</dbReference>
<dbReference type="InterPro" id="IPR012828">
    <property type="entry name" value="PFKA_ATP_prok"/>
</dbReference>
<dbReference type="InterPro" id="IPR015912">
    <property type="entry name" value="Phosphofructokinase_CS"/>
</dbReference>
<dbReference type="InterPro" id="IPR000023">
    <property type="entry name" value="Phosphofructokinase_dom"/>
</dbReference>
<dbReference type="InterPro" id="IPR035966">
    <property type="entry name" value="PKF_sf"/>
</dbReference>
<dbReference type="NCBIfam" id="TIGR02482">
    <property type="entry name" value="PFKA_ATP"/>
    <property type="match status" value="1"/>
</dbReference>
<dbReference type="NCBIfam" id="NF002872">
    <property type="entry name" value="PRK03202.1"/>
    <property type="match status" value="1"/>
</dbReference>
<dbReference type="PANTHER" id="PTHR13697:SF4">
    <property type="entry name" value="ATP-DEPENDENT 6-PHOSPHOFRUCTOKINASE"/>
    <property type="match status" value="1"/>
</dbReference>
<dbReference type="PANTHER" id="PTHR13697">
    <property type="entry name" value="PHOSPHOFRUCTOKINASE"/>
    <property type="match status" value="1"/>
</dbReference>
<dbReference type="Pfam" id="PF00365">
    <property type="entry name" value="PFK"/>
    <property type="match status" value="1"/>
</dbReference>
<dbReference type="PIRSF" id="PIRSF000532">
    <property type="entry name" value="ATP_PFK_prok"/>
    <property type="match status" value="1"/>
</dbReference>
<dbReference type="PRINTS" id="PR00476">
    <property type="entry name" value="PHFRCTKINASE"/>
</dbReference>
<dbReference type="SUPFAM" id="SSF53784">
    <property type="entry name" value="Phosphofructokinase"/>
    <property type="match status" value="1"/>
</dbReference>
<dbReference type="PROSITE" id="PS00433">
    <property type="entry name" value="PHOSPHOFRUCTOKINASE"/>
    <property type="match status" value="1"/>
</dbReference>
<evidence type="ECO:0000255" key="1">
    <source>
        <dbReference type="HAMAP-Rule" id="MF_00339"/>
    </source>
</evidence>
<protein>
    <recommendedName>
        <fullName evidence="1">ATP-dependent 6-phosphofructokinase</fullName>
        <shortName evidence="1">ATP-PFK</shortName>
        <shortName evidence="1">Phosphofructokinase</shortName>
        <ecNumber evidence="1">2.7.1.11</ecNumber>
    </recommendedName>
    <alternativeName>
        <fullName evidence="1">Phosphohexokinase</fullName>
    </alternativeName>
</protein>
<gene>
    <name evidence="1" type="primary">pfkA</name>
    <name type="ordered locus">HS_0485</name>
</gene>
<comment type="function">
    <text evidence="1">Catalyzes the phosphorylation of D-fructose 6-phosphate to fructose 1,6-bisphosphate by ATP, the first committing step of glycolysis.</text>
</comment>
<comment type="catalytic activity">
    <reaction evidence="1">
        <text>beta-D-fructose 6-phosphate + ATP = beta-D-fructose 1,6-bisphosphate + ADP + H(+)</text>
        <dbReference type="Rhea" id="RHEA:16109"/>
        <dbReference type="ChEBI" id="CHEBI:15378"/>
        <dbReference type="ChEBI" id="CHEBI:30616"/>
        <dbReference type="ChEBI" id="CHEBI:32966"/>
        <dbReference type="ChEBI" id="CHEBI:57634"/>
        <dbReference type="ChEBI" id="CHEBI:456216"/>
        <dbReference type="EC" id="2.7.1.11"/>
    </reaction>
</comment>
<comment type="cofactor">
    <cofactor evidence="1">
        <name>Mg(2+)</name>
        <dbReference type="ChEBI" id="CHEBI:18420"/>
    </cofactor>
</comment>
<comment type="activity regulation">
    <text evidence="1">Allosterically activated by ADP and other diphosphonucleosides, and allosterically inhibited by phosphoenolpyruvate.</text>
</comment>
<comment type="pathway">
    <text evidence="1">Carbohydrate degradation; glycolysis; D-glyceraldehyde 3-phosphate and glycerone phosphate from D-glucose: step 3/4.</text>
</comment>
<comment type="subunit">
    <text evidence="1">Homotetramer.</text>
</comment>
<comment type="subcellular location">
    <subcellularLocation>
        <location evidence="1">Cytoplasm</location>
    </subcellularLocation>
</comment>
<comment type="similarity">
    <text evidence="1">Belongs to the phosphofructokinase type A (PFKA) family. ATP-dependent PFK group I subfamily. Prokaryotic clade 'B1' sub-subfamily.</text>
</comment>
<sequence length="321" mass="35266">MIKKIAVLTSGGDAPGMNAAIRGVVRSALSEGLEVYGIYEGYYGLYHNKIQQLTRYSVSDIINRGGTFLGSARFPEFKDPAVREKCVEILRSHGIDALVVIGGDGSYMGAKLLTEEHDFPCVGIPGTIDNDVAGTDYTIGYQTALETAVEAIDRLRDTSSSHKRISIVEIMGRHCSDLTISAAIAGGCEYIVASEIEFNREELIKQIERAIIKGKRHAIIAITELLCDVNELAREIEARVKHETRATILGHIQRGGTPCAFDRILGSRMGVYAVDLLLQGKGGYCVGIQNEQLVHHDIIDAINNMRREFKADWLAMSKRLD</sequence>
<organism>
    <name type="scientific">Histophilus somni (strain 129Pt)</name>
    <name type="common">Haemophilus somnus</name>
    <dbReference type="NCBI Taxonomy" id="205914"/>
    <lineage>
        <taxon>Bacteria</taxon>
        <taxon>Pseudomonadati</taxon>
        <taxon>Pseudomonadota</taxon>
        <taxon>Gammaproteobacteria</taxon>
        <taxon>Pasteurellales</taxon>
        <taxon>Pasteurellaceae</taxon>
        <taxon>Histophilus</taxon>
    </lineage>
</organism>